<keyword id="KW-0028">Amino-acid biosynthesis</keyword>
<keyword id="KW-0100">Branched-chain amino acid biosynthesis</keyword>
<keyword id="KW-0460">Magnesium</keyword>
<keyword id="KW-0479">Metal-binding</keyword>
<keyword id="KW-0521">NADP</keyword>
<keyword id="KW-0560">Oxidoreductase</keyword>
<keyword id="KW-1185">Reference proteome</keyword>
<accession>B8CX20</accession>
<organism>
    <name type="scientific">Halothermothrix orenii (strain H 168 / OCM 544 / DSM 9562)</name>
    <dbReference type="NCBI Taxonomy" id="373903"/>
    <lineage>
        <taxon>Bacteria</taxon>
        <taxon>Bacillati</taxon>
        <taxon>Bacillota</taxon>
        <taxon>Clostridia</taxon>
        <taxon>Halanaerobiales</taxon>
        <taxon>Halothermotrichaceae</taxon>
        <taxon>Halothermothrix</taxon>
    </lineage>
</organism>
<sequence length="330" mass="36663">MIHVYYDKDANLGLLEEKMIAVLGYGSQGHAQAQNLKDSGLNVIVGLRKGSSSWKKAESDGFRVFKTSEAVKRADIIQVLIPDEVQSRVYKEDIEPYLEEGNALVFSHGFNIHFGQIVPPDNVDIFMVAPKSPGHLVRRMYLEGKGVPGLLAVEQDYSGKAKELGLAYAKGIGCTKAGVIETTFKEETETDLFGEQAVLCGGVTSLVKAGFEVLVEAGYQPEIAYFECLNELKLIVDLMFEGGLTKMRHSISDTAQYGDLMVGPRIVNDNVKDEMRSVLKEIQSGEFAKKWILENKANRPVFNALTSKDENHLIEKVGKKLRDMMPWINE</sequence>
<feature type="chain" id="PRO_1000190971" description="Ketol-acid reductoisomerase (NADP(+))">
    <location>
        <begin position="1"/>
        <end position="330"/>
    </location>
</feature>
<feature type="domain" description="KARI N-terminal Rossmann" evidence="2">
    <location>
        <begin position="2"/>
        <end position="182"/>
    </location>
</feature>
<feature type="domain" description="KARI C-terminal knotted" evidence="3">
    <location>
        <begin position="183"/>
        <end position="328"/>
    </location>
</feature>
<feature type="active site" evidence="1">
    <location>
        <position position="108"/>
    </location>
</feature>
<feature type="binding site" evidence="1">
    <location>
        <begin position="25"/>
        <end position="28"/>
    </location>
    <ligand>
        <name>NADP(+)</name>
        <dbReference type="ChEBI" id="CHEBI:58349"/>
    </ligand>
</feature>
<feature type="binding site" evidence="1">
    <location>
        <position position="48"/>
    </location>
    <ligand>
        <name>NADP(+)</name>
        <dbReference type="ChEBI" id="CHEBI:58349"/>
    </ligand>
</feature>
<feature type="binding site" evidence="1">
    <location>
        <position position="51"/>
    </location>
    <ligand>
        <name>NADP(+)</name>
        <dbReference type="ChEBI" id="CHEBI:58349"/>
    </ligand>
</feature>
<feature type="binding site" evidence="1">
    <location>
        <position position="53"/>
    </location>
    <ligand>
        <name>NADP(+)</name>
        <dbReference type="ChEBI" id="CHEBI:58349"/>
    </ligand>
</feature>
<feature type="binding site" evidence="1">
    <location>
        <begin position="83"/>
        <end position="86"/>
    </location>
    <ligand>
        <name>NADP(+)</name>
        <dbReference type="ChEBI" id="CHEBI:58349"/>
    </ligand>
</feature>
<feature type="binding site" evidence="1">
    <location>
        <position position="134"/>
    </location>
    <ligand>
        <name>NADP(+)</name>
        <dbReference type="ChEBI" id="CHEBI:58349"/>
    </ligand>
</feature>
<feature type="binding site" evidence="1">
    <location>
        <position position="191"/>
    </location>
    <ligand>
        <name>Mg(2+)</name>
        <dbReference type="ChEBI" id="CHEBI:18420"/>
        <label>1</label>
    </ligand>
</feature>
<feature type="binding site" evidence="1">
    <location>
        <position position="191"/>
    </location>
    <ligand>
        <name>Mg(2+)</name>
        <dbReference type="ChEBI" id="CHEBI:18420"/>
        <label>2</label>
    </ligand>
</feature>
<feature type="binding site" evidence="1">
    <location>
        <position position="195"/>
    </location>
    <ligand>
        <name>Mg(2+)</name>
        <dbReference type="ChEBI" id="CHEBI:18420"/>
        <label>1</label>
    </ligand>
</feature>
<feature type="binding site" evidence="1">
    <location>
        <position position="227"/>
    </location>
    <ligand>
        <name>Mg(2+)</name>
        <dbReference type="ChEBI" id="CHEBI:18420"/>
        <label>2</label>
    </ligand>
</feature>
<feature type="binding site" evidence="1">
    <location>
        <position position="231"/>
    </location>
    <ligand>
        <name>Mg(2+)</name>
        <dbReference type="ChEBI" id="CHEBI:18420"/>
        <label>2</label>
    </ligand>
</feature>
<feature type="binding site" evidence="1">
    <location>
        <position position="252"/>
    </location>
    <ligand>
        <name>substrate</name>
    </ligand>
</feature>
<protein>
    <recommendedName>
        <fullName evidence="1">Ketol-acid reductoisomerase (NADP(+))</fullName>
        <shortName evidence="1">KARI</shortName>
        <ecNumber evidence="1">1.1.1.86</ecNumber>
    </recommendedName>
    <alternativeName>
        <fullName evidence="1">Acetohydroxy-acid isomeroreductase</fullName>
        <shortName evidence="1">AHIR</shortName>
    </alternativeName>
    <alternativeName>
        <fullName evidence="1">Alpha-keto-beta-hydroxylacyl reductoisomerase</fullName>
    </alternativeName>
    <alternativeName>
        <fullName evidence="1">Ketol-acid reductoisomerase type 1</fullName>
    </alternativeName>
    <alternativeName>
        <fullName evidence="1">Ketol-acid reductoisomerase type I</fullName>
    </alternativeName>
</protein>
<reference key="1">
    <citation type="journal article" date="2009" name="PLoS ONE">
        <title>Genome analysis of the anaerobic thermohalophilic bacterium Halothermothrix orenii.</title>
        <authorList>
            <person name="Mavromatis K."/>
            <person name="Ivanova N."/>
            <person name="Anderson I."/>
            <person name="Lykidis A."/>
            <person name="Hooper S.D."/>
            <person name="Sun H."/>
            <person name="Kunin V."/>
            <person name="Lapidus A."/>
            <person name="Hugenholtz P."/>
            <person name="Patel B."/>
            <person name="Kyrpides N.C."/>
        </authorList>
    </citation>
    <scope>NUCLEOTIDE SEQUENCE [LARGE SCALE GENOMIC DNA]</scope>
    <source>
        <strain>H 168 / OCM 544 / DSM 9562</strain>
    </source>
</reference>
<evidence type="ECO:0000255" key="1">
    <source>
        <dbReference type="HAMAP-Rule" id="MF_00435"/>
    </source>
</evidence>
<evidence type="ECO:0000255" key="2">
    <source>
        <dbReference type="PROSITE-ProRule" id="PRU01197"/>
    </source>
</evidence>
<evidence type="ECO:0000255" key="3">
    <source>
        <dbReference type="PROSITE-ProRule" id="PRU01198"/>
    </source>
</evidence>
<proteinExistence type="inferred from homology"/>
<name>ILVC_HALOH</name>
<dbReference type="EC" id="1.1.1.86" evidence="1"/>
<dbReference type="EMBL" id="CP001098">
    <property type="protein sequence ID" value="ACL69839.1"/>
    <property type="molecule type" value="Genomic_DNA"/>
</dbReference>
<dbReference type="RefSeq" id="WP_012636024.1">
    <property type="nucleotide sequence ID" value="NC_011899.1"/>
</dbReference>
<dbReference type="SMR" id="B8CX20"/>
<dbReference type="STRING" id="373903.Hore_10850"/>
<dbReference type="KEGG" id="hor:Hore_10850"/>
<dbReference type="eggNOG" id="COG0059">
    <property type="taxonomic scope" value="Bacteria"/>
</dbReference>
<dbReference type="HOGENOM" id="CLU_033821_0_1_9"/>
<dbReference type="OrthoDB" id="9804088at2"/>
<dbReference type="UniPathway" id="UPA00047">
    <property type="reaction ID" value="UER00056"/>
</dbReference>
<dbReference type="UniPathway" id="UPA00049">
    <property type="reaction ID" value="UER00060"/>
</dbReference>
<dbReference type="Proteomes" id="UP000000719">
    <property type="component" value="Chromosome"/>
</dbReference>
<dbReference type="GO" id="GO:0005829">
    <property type="term" value="C:cytosol"/>
    <property type="evidence" value="ECO:0007669"/>
    <property type="project" value="TreeGrafter"/>
</dbReference>
<dbReference type="GO" id="GO:0004455">
    <property type="term" value="F:ketol-acid reductoisomerase activity"/>
    <property type="evidence" value="ECO:0007669"/>
    <property type="project" value="UniProtKB-UniRule"/>
</dbReference>
<dbReference type="GO" id="GO:0000287">
    <property type="term" value="F:magnesium ion binding"/>
    <property type="evidence" value="ECO:0007669"/>
    <property type="project" value="UniProtKB-UniRule"/>
</dbReference>
<dbReference type="GO" id="GO:0050661">
    <property type="term" value="F:NADP binding"/>
    <property type="evidence" value="ECO:0007669"/>
    <property type="project" value="InterPro"/>
</dbReference>
<dbReference type="GO" id="GO:0009097">
    <property type="term" value="P:isoleucine biosynthetic process"/>
    <property type="evidence" value="ECO:0007669"/>
    <property type="project" value="UniProtKB-UniRule"/>
</dbReference>
<dbReference type="GO" id="GO:0009099">
    <property type="term" value="P:L-valine biosynthetic process"/>
    <property type="evidence" value="ECO:0007669"/>
    <property type="project" value="UniProtKB-UniRule"/>
</dbReference>
<dbReference type="FunFam" id="3.40.50.720:FF:000023">
    <property type="entry name" value="Ketol-acid reductoisomerase (NADP(+))"/>
    <property type="match status" value="1"/>
</dbReference>
<dbReference type="Gene3D" id="6.10.240.10">
    <property type="match status" value="1"/>
</dbReference>
<dbReference type="Gene3D" id="3.40.50.720">
    <property type="entry name" value="NAD(P)-binding Rossmann-like Domain"/>
    <property type="match status" value="1"/>
</dbReference>
<dbReference type="HAMAP" id="MF_00435">
    <property type="entry name" value="IlvC"/>
    <property type="match status" value="1"/>
</dbReference>
<dbReference type="InterPro" id="IPR008927">
    <property type="entry name" value="6-PGluconate_DH-like_C_sf"/>
</dbReference>
<dbReference type="InterPro" id="IPR013023">
    <property type="entry name" value="KARI"/>
</dbReference>
<dbReference type="InterPro" id="IPR000506">
    <property type="entry name" value="KARI_C"/>
</dbReference>
<dbReference type="InterPro" id="IPR013116">
    <property type="entry name" value="KARI_N"/>
</dbReference>
<dbReference type="InterPro" id="IPR014359">
    <property type="entry name" value="KARI_prok"/>
</dbReference>
<dbReference type="InterPro" id="IPR036291">
    <property type="entry name" value="NAD(P)-bd_dom_sf"/>
</dbReference>
<dbReference type="NCBIfam" id="TIGR00465">
    <property type="entry name" value="ilvC"/>
    <property type="match status" value="1"/>
</dbReference>
<dbReference type="NCBIfam" id="NF004017">
    <property type="entry name" value="PRK05479.1"/>
    <property type="match status" value="1"/>
</dbReference>
<dbReference type="NCBIfam" id="NF009940">
    <property type="entry name" value="PRK13403.1"/>
    <property type="match status" value="1"/>
</dbReference>
<dbReference type="PANTHER" id="PTHR21371">
    <property type="entry name" value="KETOL-ACID REDUCTOISOMERASE, MITOCHONDRIAL"/>
    <property type="match status" value="1"/>
</dbReference>
<dbReference type="PANTHER" id="PTHR21371:SF1">
    <property type="entry name" value="KETOL-ACID REDUCTOISOMERASE, MITOCHONDRIAL"/>
    <property type="match status" value="1"/>
</dbReference>
<dbReference type="Pfam" id="PF01450">
    <property type="entry name" value="KARI_C"/>
    <property type="match status" value="1"/>
</dbReference>
<dbReference type="Pfam" id="PF07991">
    <property type="entry name" value="KARI_N"/>
    <property type="match status" value="1"/>
</dbReference>
<dbReference type="PIRSF" id="PIRSF000116">
    <property type="entry name" value="IlvC_gammaproteo"/>
    <property type="match status" value="1"/>
</dbReference>
<dbReference type="SUPFAM" id="SSF48179">
    <property type="entry name" value="6-phosphogluconate dehydrogenase C-terminal domain-like"/>
    <property type="match status" value="1"/>
</dbReference>
<dbReference type="SUPFAM" id="SSF51735">
    <property type="entry name" value="NAD(P)-binding Rossmann-fold domains"/>
    <property type="match status" value="1"/>
</dbReference>
<dbReference type="PROSITE" id="PS51851">
    <property type="entry name" value="KARI_C"/>
    <property type="match status" value="1"/>
</dbReference>
<dbReference type="PROSITE" id="PS51850">
    <property type="entry name" value="KARI_N"/>
    <property type="match status" value="1"/>
</dbReference>
<gene>
    <name evidence="1" type="primary">ilvC</name>
    <name type="ordered locus">Hore_10850</name>
</gene>
<comment type="function">
    <text evidence="1">Involved in the biosynthesis of branched-chain amino acids (BCAA). Catalyzes an alkyl-migration followed by a ketol-acid reduction of (S)-2-acetolactate (S2AL) to yield (R)-2,3-dihydroxy-isovalerate. In the isomerase reaction, S2AL is rearranged via a Mg-dependent methyl migration to produce 3-hydroxy-3-methyl-2-ketobutyrate (HMKB). In the reductase reaction, this 2-ketoacid undergoes a metal-dependent reduction by NADPH to yield (R)-2,3-dihydroxy-isovalerate.</text>
</comment>
<comment type="catalytic activity">
    <reaction evidence="1">
        <text>(2R)-2,3-dihydroxy-3-methylbutanoate + NADP(+) = (2S)-2-acetolactate + NADPH + H(+)</text>
        <dbReference type="Rhea" id="RHEA:22068"/>
        <dbReference type="ChEBI" id="CHEBI:15378"/>
        <dbReference type="ChEBI" id="CHEBI:49072"/>
        <dbReference type="ChEBI" id="CHEBI:57783"/>
        <dbReference type="ChEBI" id="CHEBI:58349"/>
        <dbReference type="ChEBI" id="CHEBI:58476"/>
        <dbReference type="EC" id="1.1.1.86"/>
    </reaction>
</comment>
<comment type="catalytic activity">
    <reaction evidence="1">
        <text>(2R,3R)-2,3-dihydroxy-3-methylpentanoate + NADP(+) = (S)-2-ethyl-2-hydroxy-3-oxobutanoate + NADPH + H(+)</text>
        <dbReference type="Rhea" id="RHEA:13493"/>
        <dbReference type="ChEBI" id="CHEBI:15378"/>
        <dbReference type="ChEBI" id="CHEBI:49256"/>
        <dbReference type="ChEBI" id="CHEBI:49258"/>
        <dbReference type="ChEBI" id="CHEBI:57783"/>
        <dbReference type="ChEBI" id="CHEBI:58349"/>
        <dbReference type="EC" id="1.1.1.86"/>
    </reaction>
</comment>
<comment type="cofactor">
    <cofactor evidence="1">
        <name>Mg(2+)</name>
        <dbReference type="ChEBI" id="CHEBI:18420"/>
    </cofactor>
    <text evidence="1">Binds 2 magnesium ions per subunit.</text>
</comment>
<comment type="pathway">
    <text evidence="1">Amino-acid biosynthesis; L-isoleucine biosynthesis; L-isoleucine from 2-oxobutanoate: step 2/4.</text>
</comment>
<comment type="pathway">
    <text evidence="1">Amino-acid biosynthesis; L-valine biosynthesis; L-valine from pyruvate: step 2/4.</text>
</comment>
<comment type="similarity">
    <text evidence="1">Belongs to the ketol-acid reductoisomerase family.</text>
</comment>